<accession>P24442</accession>
<name>CEP2_HHV6U</name>
<comment type="function">
    <text evidence="1">Plays a critical role in cytoplasmic virus egress. Participates in the final step of tegumentation and envelope acquisition within the host cytoplasm by directly interacting with the capsid. Upon virion binding to target cell, a signaling cascade is triggered to disrupt the interaction with the capsid, thereby preparing capsid uncoating.</text>
</comment>
<comment type="subunit">
    <text evidence="1">Interacts with cytoplasmic envelopment protein 3 and with the capsid.</text>
</comment>
<comment type="subcellular location">
    <subcellularLocation>
        <location evidence="1">Virion tegument</location>
    </subcellularLocation>
    <subcellularLocation>
        <location evidence="1">Host cytoplasm</location>
    </subcellularLocation>
    <subcellularLocation>
        <location evidence="1">Host nucleus</location>
    </subcellularLocation>
    <text evidence="1">Localizes in the host nucleus up to 18 hours postinfection, but at later times localizes to punctate, cytoplasmic structures.</text>
</comment>
<comment type="similarity">
    <text evidence="1">Belongs to the herpesviridae cytoplasmic envelopment protein 2 family.</text>
</comment>
<reference key="1">
    <citation type="journal article" date="1990" name="J. Virol.">
        <title>Human herpesvirus 6 is closely related to human cytomegalovirus.</title>
        <authorList>
            <person name="Lawrence G.L."/>
            <person name="Chee M."/>
            <person name="Craxton M.A."/>
            <person name="Gompels U.A."/>
            <person name="Honess R.W."/>
            <person name="Barrell B.G."/>
        </authorList>
    </citation>
    <scope>NUCLEOTIDE SEQUENCE [GENOMIC DNA]</scope>
</reference>
<reference key="2">
    <citation type="journal article" date="1995" name="Virology">
        <title>The DNA sequence of human herpesvirus-6: structure, coding content, and genome evolution.</title>
        <authorList>
            <person name="Gompels U.A."/>
            <person name="Nicholas J."/>
            <person name="Lawrence G.L."/>
            <person name="Jones M."/>
            <person name="Thomson B.J."/>
            <person name="Martin M.E.D."/>
            <person name="Efstathiou S."/>
            <person name="Craxton M.A."/>
            <person name="Macaulay H.A."/>
        </authorList>
    </citation>
    <scope>NUCLEOTIDE SEQUENCE [LARGE SCALE GENOMIC DNA]</scope>
</reference>
<feature type="chain" id="PRO_0000115950" description="Cytoplasmic envelopment protein 2">
    <location>
        <begin position="1"/>
        <end position="335"/>
    </location>
</feature>
<evidence type="ECO:0000255" key="1">
    <source>
        <dbReference type="HAMAP-Rule" id="MF_04039"/>
    </source>
</evidence>
<dbReference type="EMBL" id="X83413">
    <property type="protein sequence ID" value="CAA58357.1"/>
    <property type="molecule type" value="Genomic_DNA"/>
</dbReference>
<dbReference type="EMBL" id="M68963">
    <property type="protein sequence ID" value="AAA65574.1"/>
    <property type="molecule type" value="Genomic_DNA"/>
</dbReference>
<dbReference type="PIR" id="B36769">
    <property type="entry name" value="B36769"/>
</dbReference>
<dbReference type="RefSeq" id="NP_042958.1">
    <property type="nucleotide sequence ID" value="NC_001664.2"/>
</dbReference>
<dbReference type="DNASU" id="1487947"/>
<dbReference type="GeneID" id="1487947"/>
<dbReference type="KEGG" id="vg:1487947"/>
<dbReference type="Proteomes" id="UP000009295">
    <property type="component" value="Segment"/>
</dbReference>
<dbReference type="GO" id="GO:0030430">
    <property type="term" value="C:host cell cytoplasm"/>
    <property type="evidence" value="ECO:0007669"/>
    <property type="project" value="UniProtKB-SubCell"/>
</dbReference>
<dbReference type="GO" id="GO:0042025">
    <property type="term" value="C:host cell nucleus"/>
    <property type="evidence" value="ECO:0007669"/>
    <property type="project" value="UniProtKB-SubCell"/>
</dbReference>
<dbReference type="GO" id="GO:0019033">
    <property type="term" value="C:viral tegument"/>
    <property type="evidence" value="ECO:0007669"/>
    <property type="project" value="UniProtKB-SubCell"/>
</dbReference>
<dbReference type="HAMAP" id="MF_04039">
    <property type="entry name" value="HSV_CEP2"/>
    <property type="match status" value="1"/>
</dbReference>
<dbReference type="InterPro" id="IPR004286">
    <property type="entry name" value="Herpes_UL16/UL94"/>
</dbReference>
<dbReference type="Pfam" id="PF03044">
    <property type="entry name" value="Herpes_UL16"/>
    <property type="match status" value="1"/>
</dbReference>
<organism>
    <name type="scientific">Human herpesvirus 6A (strain Uganda-1102)</name>
    <name type="common">HHV-6 variant A</name>
    <name type="synonym">Human B lymphotropic virus</name>
    <dbReference type="NCBI Taxonomy" id="10370"/>
    <lineage>
        <taxon>Viruses</taxon>
        <taxon>Duplodnaviria</taxon>
        <taxon>Heunggongvirae</taxon>
        <taxon>Peploviricota</taxon>
        <taxon>Herviviricetes</taxon>
        <taxon>Herpesvirales</taxon>
        <taxon>Orthoherpesviridae</taxon>
        <taxon>Betaherpesvirinae</taxon>
        <taxon>Roseolovirus</taxon>
        <taxon>Roseolovirus humanbeta6a</taxon>
        <taxon>Human betaherpesvirus 6A</taxon>
    </lineage>
</organism>
<gene>
    <name type="primary">U65</name>
    <name type="synonym">11R</name>
</gene>
<sequence length="335" mass="37877">MAISTFSIGDLGYLRNFLQNECNWFRICKKTFYREYRSVATSSPTFSLNNKPKKFCMHCEIVIFKRSEEFMFSLAVNGIHFGQFLTGKMKFNKKAVPEGLYYYILELGSITPIDLGFIPRYNSDCVTNMRCVTPEVIYENCSIVCPEEANRLTVKGSGDNKLTPLGGCGAWCLKNGGDLYIYTFALAYDLFLTCYDKSTFPSLAKIIFDMIACESEDCVFCKDHNKHVSQAGQIVGCVSNQETCFCYTSCKKKMANINNPELISLLCDQEINKIDIMYPKIKASLSLDINSYAHGYFGDDPYALKCVNWIPVRISAALSRLIVLSCPVCKRVVMD</sequence>
<keyword id="KW-1035">Host cytoplasm</keyword>
<keyword id="KW-1048">Host nucleus</keyword>
<keyword id="KW-0426">Late protein</keyword>
<keyword id="KW-1185">Reference proteome</keyword>
<keyword id="KW-0946">Virion</keyword>
<keyword id="KW-0920">Virion tegument</keyword>
<proteinExistence type="inferred from homology"/>
<organismHost>
    <name type="scientific">Homo sapiens</name>
    <name type="common">Human</name>
    <dbReference type="NCBI Taxonomy" id="9606"/>
</organismHost>
<protein>
    <recommendedName>
        <fullName evidence="1">Cytoplasmic envelopment protein 2</fullName>
    </recommendedName>
</protein>